<protein>
    <recommendedName>
        <fullName evidence="1">Anhydro-N-acetylmuramic acid kinase</fullName>
        <ecNumber evidence="1">2.7.1.170</ecNumber>
    </recommendedName>
    <alternativeName>
        <fullName evidence="1">AnhMurNAc kinase</fullName>
    </alternativeName>
</protein>
<name>ANMK_ECOL5</name>
<reference key="1">
    <citation type="journal article" date="2006" name="Mol. Microbiol.">
        <title>Role of pathogenicity island-associated integrases in the genome plasticity of uropathogenic Escherichia coli strain 536.</title>
        <authorList>
            <person name="Hochhut B."/>
            <person name="Wilde C."/>
            <person name="Balling G."/>
            <person name="Middendorf B."/>
            <person name="Dobrindt U."/>
            <person name="Brzuszkiewicz E."/>
            <person name="Gottschalk G."/>
            <person name="Carniel E."/>
            <person name="Hacker J."/>
        </authorList>
    </citation>
    <scope>NUCLEOTIDE SEQUENCE [LARGE SCALE GENOMIC DNA]</scope>
    <source>
        <strain>536 / UPEC</strain>
    </source>
</reference>
<feature type="chain" id="PRO_1000067347" description="Anhydro-N-acetylmuramic acid kinase">
    <location>
        <begin position="1"/>
        <end position="369"/>
    </location>
</feature>
<feature type="binding site" evidence="1">
    <location>
        <begin position="12"/>
        <end position="19"/>
    </location>
    <ligand>
        <name>ATP</name>
        <dbReference type="ChEBI" id="CHEBI:30616"/>
    </ligand>
</feature>
<sequence length="369" mass="39502">MKSGRFIGVMSGTSLDGVDVVLATIDEHRVAQLASLSWPIPVSLKQAVLDICQGQQLTLSQFGQLDTQLGRLFADAVNALLKEQNLQARDIVAIGCHGQTVWHEPTGVAPHTLQIGDNNQIVARTGITVVGDFRRRDIALGGQGAPLVPAFHHALLAHPTERRMVLNIGGIANLSLLITGQPVGGYDTGPGNMLMDAWIWRQAGKPYDKDAEWARAGKVILPLLQNMLCDPYFSQPAPKSTGREYFNYGWLERHLRHFPGGDPRDVQATLAELTAVTISEQVLLSGGCERLMVCGGGSRNPLLMARLAALLPGTEVTTTDAVGISGDDMEALAFAWLAWRTLAGLPGNLPSVTGASQETVLGAIFPANP</sequence>
<organism>
    <name type="scientific">Escherichia coli O6:K15:H31 (strain 536 / UPEC)</name>
    <dbReference type="NCBI Taxonomy" id="362663"/>
    <lineage>
        <taxon>Bacteria</taxon>
        <taxon>Pseudomonadati</taxon>
        <taxon>Pseudomonadota</taxon>
        <taxon>Gammaproteobacteria</taxon>
        <taxon>Enterobacterales</taxon>
        <taxon>Enterobacteriaceae</taxon>
        <taxon>Escherichia</taxon>
    </lineage>
</organism>
<accession>Q0THI8</accession>
<dbReference type="EC" id="2.7.1.170" evidence="1"/>
<dbReference type="EMBL" id="CP000247">
    <property type="protein sequence ID" value="ABG69591.1"/>
    <property type="molecule type" value="Genomic_DNA"/>
</dbReference>
<dbReference type="RefSeq" id="WP_000835088.1">
    <property type="nucleotide sequence ID" value="NC_008253.1"/>
</dbReference>
<dbReference type="SMR" id="Q0THI8"/>
<dbReference type="KEGG" id="ecp:ECP_1586"/>
<dbReference type="HOGENOM" id="CLU_038782_0_0_6"/>
<dbReference type="UniPathway" id="UPA00343"/>
<dbReference type="UniPathway" id="UPA00544"/>
<dbReference type="Proteomes" id="UP000009182">
    <property type="component" value="Chromosome"/>
</dbReference>
<dbReference type="GO" id="GO:0005524">
    <property type="term" value="F:ATP binding"/>
    <property type="evidence" value="ECO:0007669"/>
    <property type="project" value="UniProtKB-UniRule"/>
</dbReference>
<dbReference type="GO" id="GO:0016301">
    <property type="term" value="F:kinase activity"/>
    <property type="evidence" value="ECO:0007669"/>
    <property type="project" value="UniProtKB-KW"/>
</dbReference>
<dbReference type="GO" id="GO:0016773">
    <property type="term" value="F:phosphotransferase activity, alcohol group as acceptor"/>
    <property type="evidence" value="ECO:0007669"/>
    <property type="project" value="UniProtKB-UniRule"/>
</dbReference>
<dbReference type="GO" id="GO:0097175">
    <property type="term" value="P:1,6-anhydro-N-acetyl-beta-muramic acid catabolic process"/>
    <property type="evidence" value="ECO:0007669"/>
    <property type="project" value="UniProtKB-UniRule"/>
</dbReference>
<dbReference type="GO" id="GO:0006040">
    <property type="term" value="P:amino sugar metabolic process"/>
    <property type="evidence" value="ECO:0007669"/>
    <property type="project" value="InterPro"/>
</dbReference>
<dbReference type="GO" id="GO:0009254">
    <property type="term" value="P:peptidoglycan turnover"/>
    <property type="evidence" value="ECO:0007669"/>
    <property type="project" value="UniProtKB-UniRule"/>
</dbReference>
<dbReference type="CDD" id="cd24050">
    <property type="entry name" value="ASKHA_NBD_ANMK"/>
    <property type="match status" value="1"/>
</dbReference>
<dbReference type="Gene3D" id="3.30.420.40">
    <property type="match status" value="2"/>
</dbReference>
<dbReference type="HAMAP" id="MF_01270">
    <property type="entry name" value="AnhMurNAc_kinase"/>
    <property type="match status" value="1"/>
</dbReference>
<dbReference type="InterPro" id="IPR005338">
    <property type="entry name" value="Anhydro_N_Ac-Mur_kinase"/>
</dbReference>
<dbReference type="InterPro" id="IPR043129">
    <property type="entry name" value="ATPase_NBD"/>
</dbReference>
<dbReference type="NCBIfam" id="NF007138">
    <property type="entry name" value="PRK09585.1-1"/>
    <property type="match status" value="1"/>
</dbReference>
<dbReference type="NCBIfam" id="NF007139">
    <property type="entry name" value="PRK09585.1-3"/>
    <property type="match status" value="1"/>
</dbReference>
<dbReference type="NCBIfam" id="NF007148">
    <property type="entry name" value="PRK09585.3-2"/>
    <property type="match status" value="1"/>
</dbReference>
<dbReference type="PANTHER" id="PTHR30605">
    <property type="entry name" value="ANHYDRO-N-ACETYLMURAMIC ACID KINASE"/>
    <property type="match status" value="1"/>
</dbReference>
<dbReference type="PANTHER" id="PTHR30605:SF0">
    <property type="entry name" value="ANHYDRO-N-ACETYLMURAMIC ACID KINASE"/>
    <property type="match status" value="1"/>
</dbReference>
<dbReference type="Pfam" id="PF03702">
    <property type="entry name" value="AnmK"/>
    <property type="match status" value="1"/>
</dbReference>
<dbReference type="SUPFAM" id="SSF53067">
    <property type="entry name" value="Actin-like ATPase domain"/>
    <property type="match status" value="1"/>
</dbReference>
<keyword id="KW-0067">ATP-binding</keyword>
<keyword id="KW-0119">Carbohydrate metabolism</keyword>
<keyword id="KW-0418">Kinase</keyword>
<keyword id="KW-0547">Nucleotide-binding</keyword>
<keyword id="KW-0808">Transferase</keyword>
<proteinExistence type="inferred from homology"/>
<gene>
    <name evidence="1" type="primary">anmK</name>
    <name type="ordered locus">ECP_1586</name>
</gene>
<comment type="function">
    <text evidence="1">Catalyzes the specific phosphorylation of 1,6-anhydro-N-acetylmuramic acid (anhMurNAc) with the simultaneous cleavage of the 1,6-anhydro ring, generating MurNAc-6-P. Is required for the utilization of anhMurNAc either imported from the medium or derived from its own cell wall murein, and thus plays a role in cell wall recycling.</text>
</comment>
<comment type="catalytic activity">
    <reaction evidence="1">
        <text>1,6-anhydro-N-acetyl-beta-muramate + ATP + H2O = N-acetyl-D-muramate 6-phosphate + ADP + H(+)</text>
        <dbReference type="Rhea" id="RHEA:24952"/>
        <dbReference type="ChEBI" id="CHEBI:15377"/>
        <dbReference type="ChEBI" id="CHEBI:15378"/>
        <dbReference type="ChEBI" id="CHEBI:30616"/>
        <dbReference type="ChEBI" id="CHEBI:58690"/>
        <dbReference type="ChEBI" id="CHEBI:58722"/>
        <dbReference type="ChEBI" id="CHEBI:456216"/>
        <dbReference type="EC" id="2.7.1.170"/>
    </reaction>
</comment>
<comment type="pathway">
    <text evidence="1">Amino-sugar metabolism; 1,6-anhydro-N-acetylmuramate degradation.</text>
</comment>
<comment type="pathway">
    <text evidence="1">Cell wall biogenesis; peptidoglycan recycling.</text>
</comment>
<comment type="similarity">
    <text evidence="1">Belongs to the anhydro-N-acetylmuramic acid kinase family.</text>
</comment>
<evidence type="ECO:0000255" key="1">
    <source>
        <dbReference type="HAMAP-Rule" id="MF_01270"/>
    </source>
</evidence>